<sequence>MDVVPLPLLLGSLAVSAAVWYLVYFLRGGSGGDAARKRRPLPPGPRGWPVLGNLPQLGDKPHHTMCALARQYGPLFRLRFGCAEVVVAASAPVAAQFLRGHDANFSNRPPNSGAEHVAYNYQDLVFAPYGARWRALRKLCALHLFSAKALDDLRAVREGEVALMVRNLARQQAASVALGQEANVCATNTLARATIGHRVFAVDGGEGAREFKEMVVELMQLAGVFNVGDFVPALRWLDPQGVVAKMKRLHRRYDNMMNGFINERKAGAQPDGVAAGEHGNDLLSVLLARMQEEQKLDGDGEKITETDIKALLLNLFTAGTDTTSSTVEWALAELIRHPDVLKEAQHELDTVVGRGRLVSESDLPRLPYLTAVIKETFRLHPSTPLSLPREAAEECEVDGYRIPKGATLLVNVWAIARDPTQWPDPLQYQPSRFLPGRMHADVDVKGADFGLIPFGAGRRICAGLSWGLRMVTLMTATLVHGFDWTLANGATPDKLNMEEAYGLTLQRAVPLMVQPVPRLLPSAYGV</sequence>
<reference key="1">
    <citation type="submission" date="2011-01" db="EMBL/GenBank/DDBJ databases">
        <title>Cloning and analysis of the genes for flavonoid 3'-hydroxylase from Oryza sativa Nipponbare.</title>
        <authorList>
            <person name="Liu N.N."/>
            <person name="Wang B.Q."/>
            <person name="Guan Y."/>
        </authorList>
    </citation>
    <scope>NUCLEOTIDE SEQUENCE [GENOMIC DNA]</scope>
</reference>
<reference key="2">
    <citation type="journal article" date="2003" name="Science">
        <title>In-depth view of structure, activity, and evolution of rice chromosome 10.</title>
        <authorList>
            <person name="Yu Y."/>
            <person name="Rambo T."/>
            <person name="Currie J."/>
            <person name="Saski C."/>
            <person name="Kim H.-R."/>
            <person name="Collura K."/>
            <person name="Thompson S."/>
            <person name="Simmons J."/>
            <person name="Yang T.-J."/>
            <person name="Nah G."/>
            <person name="Patel A.J."/>
            <person name="Thurmond S."/>
            <person name="Henry D."/>
            <person name="Oates R."/>
            <person name="Palmer M."/>
            <person name="Pries G."/>
            <person name="Gibson J."/>
            <person name="Anderson H."/>
            <person name="Paradkar M."/>
            <person name="Crane L."/>
            <person name="Dale J."/>
            <person name="Carver M.B."/>
            <person name="Wood T."/>
            <person name="Frisch D."/>
            <person name="Engler F."/>
            <person name="Soderlund C."/>
            <person name="Palmer L.E."/>
            <person name="Teytelman L."/>
            <person name="Nascimento L."/>
            <person name="De la Bastide M."/>
            <person name="Spiegel L."/>
            <person name="Ware D."/>
            <person name="O'Shaughnessy A."/>
            <person name="Dike S."/>
            <person name="Dedhia N."/>
            <person name="Preston R."/>
            <person name="Huang E."/>
            <person name="Ferraro K."/>
            <person name="Kuit K."/>
            <person name="Miller B."/>
            <person name="Zutavern T."/>
            <person name="Katzenberger F."/>
            <person name="Muller S."/>
            <person name="Balija V."/>
            <person name="Martienssen R.A."/>
            <person name="Stein L."/>
            <person name="Minx P."/>
            <person name="Johnson D."/>
            <person name="Cordum H."/>
            <person name="Mardis E."/>
            <person name="Cheng Z."/>
            <person name="Jiang J."/>
            <person name="Wilson R."/>
            <person name="McCombie W.R."/>
            <person name="Wing R.A."/>
            <person name="Yuan Q."/>
            <person name="Ouyang S."/>
            <person name="Liu J."/>
            <person name="Jones K.M."/>
            <person name="Gansberger K."/>
            <person name="Moffat K."/>
            <person name="Hill J."/>
            <person name="Tsitrin T."/>
            <person name="Overton L."/>
            <person name="Bera J."/>
            <person name="Kim M."/>
            <person name="Jin S."/>
            <person name="Tallon L."/>
            <person name="Ciecko A."/>
            <person name="Pai G."/>
            <person name="Van Aken S."/>
            <person name="Utterback T."/>
            <person name="Reidmuller S."/>
            <person name="Bormann J."/>
            <person name="Feldblyum T."/>
            <person name="Hsiao J."/>
            <person name="Zismann V."/>
            <person name="Blunt S."/>
            <person name="de Vazeille A.R."/>
            <person name="Shaffer T."/>
            <person name="Koo H."/>
            <person name="Suh B."/>
            <person name="Yang Q."/>
            <person name="Haas B."/>
            <person name="Peterson J."/>
            <person name="Pertea M."/>
            <person name="Volfovsky N."/>
            <person name="Wortman J."/>
            <person name="White O."/>
            <person name="Salzberg S.L."/>
            <person name="Fraser C.M."/>
            <person name="Buell C.R."/>
            <person name="Messing J."/>
            <person name="Song R."/>
            <person name="Fuks G."/>
            <person name="Llaca V."/>
            <person name="Kovchak S."/>
            <person name="Young S."/>
            <person name="Bowers J.E."/>
            <person name="Paterson A.H."/>
            <person name="Johns M.A."/>
            <person name="Mao L."/>
            <person name="Pan H."/>
            <person name="Dean R.A."/>
        </authorList>
    </citation>
    <scope>NUCLEOTIDE SEQUENCE [LARGE SCALE GENOMIC DNA]</scope>
    <source>
        <strain>cv. Nipponbare</strain>
    </source>
</reference>
<reference key="3">
    <citation type="journal article" date="2005" name="Nature">
        <title>The map-based sequence of the rice genome.</title>
        <authorList>
            <consortium name="International rice genome sequencing project (IRGSP)"/>
        </authorList>
    </citation>
    <scope>NUCLEOTIDE SEQUENCE [LARGE SCALE GENOMIC DNA]</scope>
    <source>
        <strain>cv. Nipponbare</strain>
    </source>
</reference>
<reference key="4">
    <citation type="journal article" date="2008" name="Nucleic Acids Res.">
        <title>The rice annotation project database (RAP-DB): 2008 update.</title>
        <authorList>
            <consortium name="The rice annotation project (RAP)"/>
        </authorList>
    </citation>
    <scope>GENOME REANNOTATION</scope>
    <source>
        <strain>cv. Nipponbare</strain>
    </source>
</reference>
<reference key="5">
    <citation type="journal article" date="2013" name="Rice">
        <title>Improvement of the Oryza sativa Nipponbare reference genome using next generation sequence and optical map data.</title>
        <authorList>
            <person name="Kawahara Y."/>
            <person name="de la Bastide M."/>
            <person name="Hamilton J.P."/>
            <person name="Kanamori H."/>
            <person name="McCombie W.R."/>
            <person name="Ouyang S."/>
            <person name="Schwartz D.C."/>
            <person name="Tanaka T."/>
            <person name="Wu J."/>
            <person name="Zhou S."/>
            <person name="Childs K.L."/>
            <person name="Davidson R.M."/>
            <person name="Lin H."/>
            <person name="Quesada-Ocampo L."/>
            <person name="Vaillancourt B."/>
            <person name="Sakai H."/>
            <person name="Lee S.S."/>
            <person name="Kim J."/>
            <person name="Numa H."/>
            <person name="Itoh T."/>
            <person name="Buell C.R."/>
            <person name="Matsumoto T."/>
        </authorList>
    </citation>
    <scope>GENOME REANNOTATION</scope>
    <source>
        <strain>cv. Nipponbare</strain>
    </source>
</reference>
<reference key="6">
    <citation type="journal article" date="2005" name="PLoS Biol.">
        <title>The genomes of Oryza sativa: a history of duplications.</title>
        <authorList>
            <person name="Yu J."/>
            <person name="Wang J."/>
            <person name="Lin W."/>
            <person name="Li S."/>
            <person name="Li H."/>
            <person name="Zhou J."/>
            <person name="Ni P."/>
            <person name="Dong W."/>
            <person name="Hu S."/>
            <person name="Zeng C."/>
            <person name="Zhang J."/>
            <person name="Zhang Y."/>
            <person name="Li R."/>
            <person name="Xu Z."/>
            <person name="Li S."/>
            <person name="Li X."/>
            <person name="Zheng H."/>
            <person name="Cong L."/>
            <person name="Lin L."/>
            <person name="Yin J."/>
            <person name="Geng J."/>
            <person name="Li G."/>
            <person name="Shi J."/>
            <person name="Liu J."/>
            <person name="Lv H."/>
            <person name="Li J."/>
            <person name="Wang J."/>
            <person name="Deng Y."/>
            <person name="Ran L."/>
            <person name="Shi X."/>
            <person name="Wang X."/>
            <person name="Wu Q."/>
            <person name="Li C."/>
            <person name="Ren X."/>
            <person name="Wang J."/>
            <person name="Wang X."/>
            <person name="Li D."/>
            <person name="Liu D."/>
            <person name="Zhang X."/>
            <person name="Ji Z."/>
            <person name="Zhao W."/>
            <person name="Sun Y."/>
            <person name="Zhang Z."/>
            <person name="Bao J."/>
            <person name="Han Y."/>
            <person name="Dong L."/>
            <person name="Ji J."/>
            <person name="Chen P."/>
            <person name="Wu S."/>
            <person name="Liu J."/>
            <person name="Xiao Y."/>
            <person name="Bu D."/>
            <person name="Tan J."/>
            <person name="Yang L."/>
            <person name="Ye C."/>
            <person name="Zhang J."/>
            <person name="Xu J."/>
            <person name="Zhou Y."/>
            <person name="Yu Y."/>
            <person name="Zhang B."/>
            <person name="Zhuang S."/>
            <person name="Wei H."/>
            <person name="Liu B."/>
            <person name="Lei M."/>
            <person name="Yu H."/>
            <person name="Li Y."/>
            <person name="Xu H."/>
            <person name="Wei S."/>
            <person name="He X."/>
            <person name="Fang L."/>
            <person name="Zhang Z."/>
            <person name="Zhang Y."/>
            <person name="Huang X."/>
            <person name="Su Z."/>
            <person name="Tong W."/>
            <person name="Li J."/>
            <person name="Tong Z."/>
            <person name="Li S."/>
            <person name="Ye J."/>
            <person name="Wang L."/>
            <person name="Fang L."/>
            <person name="Lei T."/>
            <person name="Chen C.-S."/>
            <person name="Chen H.-C."/>
            <person name="Xu Z."/>
            <person name="Li H."/>
            <person name="Huang H."/>
            <person name="Zhang F."/>
            <person name="Xu H."/>
            <person name="Li N."/>
            <person name="Zhao C."/>
            <person name="Li S."/>
            <person name="Dong L."/>
            <person name="Huang Y."/>
            <person name="Li L."/>
            <person name="Xi Y."/>
            <person name="Qi Q."/>
            <person name="Li W."/>
            <person name="Zhang B."/>
            <person name="Hu W."/>
            <person name="Zhang Y."/>
            <person name="Tian X."/>
            <person name="Jiao Y."/>
            <person name="Liang X."/>
            <person name="Jin J."/>
            <person name="Gao L."/>
            <person name="Zheng W."/>
            <person name="Hao B."/>
            <person name="Liu S.-M."/>
            <person name="Wang W."/>
            <person name="Yuan L."/>
            <person name="Cao M."/>
            <person name="McDermott J."/>
            <person name="Samudrala R."/>
            <person name="Wang J."/>
            <person name="Wong G.K.-S."/>
            <person name="Yang H."/>
        </authorList>
    </citation>
    <scope>NUCLEOTIDE SEQUENCE [LARGE SCALE GENOMIC DNA]</scope>
    <source>
        <strain>cv. Nipponbare</strain>
    </source>
</reference>
<reference key="7">
    <citation type="journal article" date="2003" name="Science">
        <title>Collection, mapping, and annotation of over 28,000 cDNA clones from japonica rice.</title>
        <authorList>
            <consortium name="The rice full-length cDNA consortium"/>
        </authorList>
    </citation>
    <scope>NUCLEOTIDE SEQUENCE [LARGE SCALE MRNA]</scope>
    <source>
        <strain>cv. Nipponbare</strain>
    </source>
</reference>
<reference key="8">
    <citation type="journal article" date="2008" name="Planta">
        <title>Functional characterization of key structural genes in rice flavonoid biosynthesis.</title>
        <authorList>
            <person name="Shih C.H."/>
            <person name="Chu H."/>
            <person name="Tang L.K."/>
            <person name="Sakamoto W."/>
            <person name="Maekawa M."/>
            <person name="Chu I.K."/>
            <person name="Wang M."/>
            <person name="Lo C."/>
        </authorList>
    </citation>
    <scope>FUNCTION</scope>
    <scope>INDUCTION BY LIGHT</scope>
</reference>
<reference key="9">
    <citation type="journal article" date="2015" name="Plant Physiol.">
        <title>Completion of tricin biosynthesis pathway in rice: cytochrome P450 75B4 is a unique chrysoeriol 5'-hydroxylase.</title>
        <authorList>
            <person name="Lam P.Y."/>
            <person name="Liu H."/>
            <person name="Lo C."/>
        </authorList>
    </citation>
    <scope>FUNCTION</scope>
</reference>
<evidence type="ECO:0000250" key="1">
    <source>
        <dbReference type="UniProtKB" id="P04798"/>
    </source>
</evidence>
<evidence type="ECO:0000255" key="2"/>
<evidence type="ECO:0000269" key="3">
    <source>
    </source>
</evidence>
<evidence type="ECO:0000303" key="4">
    <source>
    </source>
</evidence>
<evidence type="ECO:0000303" key="5">
    <source>
    </source>
</evidence>
<evidence type="ECO:0000305" key="6"/>
<evidence type="ECO:0000305" key="7">
    <source>
    </source>
</evidence>
<evidence type="ECO:0000305" key="8">
    <source>
    </source>
</evidence>
<evidence type="ECO:0000312" key="9">
    <source>
        <dbReference type="EMBL" id="AAM00948.1"/>
    </source>
</evidence>
<evidence type="ECO:0000312" key="10">
    <source>
        <dbReference type="EMBL" id="AAN04937.1"/>
    </source>
</evidence>
<evidence type="ECO:0000312" key="11">
    <source>
        <dbReference type="EMBL" id="AAP52914.1"/>
    </source>
</evidence>
<evidence type="ECO:0000312" key="12">
    <source>
        <dbReference type="EMBL" id="BAF26252.1"/>
    </source>
</evidence>
<evidence type="ECO:0000312" key="13">
    <source>
        <dbReference type="EMBL" id="EAZ15637.1"/>
    </source>
</evidence>
<gene>
    <name evidence="5" type="primary">CYP75B3</name>
    <name evidence="4" type="synonym">F3'H</name>
    <name evidence="12" type="ordered locus">Os10g0320100</name>
    <name evidence="11" type="ordered locus">LOC_Os10g17260</name>
    <name evidence="13" type="ORF">OsJ_31048</name>
    <name evidence="10" type="ORF">OSJNAa0053D03.2</name>
    <name evidence="9" type="ORF">OSJNBa0053D03.12</name>
</gene>
<name>C75B3_ORYSJ</name>
<dbReference type="EC" id="1.14.14.82" evidence="7"/>
<dbReference type="EMBL" id="HQ876708">
    <property type="protein sequence ID" value="AEK31169.1"/>
    <property type="molecule type" value="Genomic_RNA"/>
</dbReference>
<dbReference type="EMBL" id="AC021892">
    <property type="protein sequence ID" value="AAM00948.1"/>
    <property type="molecule type" value="Genomic_DNA"/>
</dbReference>
<dbReference type="EMBL" id="AC131968">
    <property type="protein sequence ID" value="AAN04937.1"/>
    <property type="molecule type" value="Genomic_DNA"/>
</dbReference>
<dbReference type="EMBL" id="DP000086">
    <property type="protein sequence ID" value="AAP52914.1"/>
    <property type="molecule type" value="Genomic_DNA"/>
</dbReference>
<dbReference type="EMBL" id="AP008216">
    <property type="protein sequence ID" value="BAF26252.1"/>
    <property type="molecule type" value="Genomic_DNA"/>
</dbReference>
<dbReference type="EMBL" id="AP014966">
    <property type="protein sequence ID" value="BAT10309.1"/>
    <property type="molecule type" value="Genomic_DNA"/>
</dbReference>
<dbReference type="EMBL" id="CM000147">
    <property type="protein sequence ID" value="EAZ15637.1"/>
    <property type="molecule type" value="Genomic_DNA"/>
</dbReference>
<dbReference type="EMBL" id="AK064736">
    <property type="protein sequence ID" value="BAG89180.1"/>
    <property type="molecule type" value="mRNA"/>
</dbReference>
<dbReference type="SMR" id="Q7G602"/>
<dbReference type="FunCoup" id="Q7G602">
    <property type="interactions" value="859"/>
</dbReference>
<dbReference type="STRING" id="39947.Q7G602"/>
<dbReference type="PaxDb" id="39947-Q7G602"/>
<dbReference type="EnsemblPlants" id="Os10t0320100-01">
    <property type="protein sequence ID" value="Os10t0320100-01"/>
    <property type="gene ID" value="Os10g0320100"/>
</dbReference>
<dbReference type="Gramene" id="Os10t0320100-01">
    <property type="protein sequence ID" value="Os10t0320100-01"/>
    <property type="gene ID" value="Os10g0320100"/>
</dbReference>
<dbReference type="KEGG" id="dosa:Os10g0320100"/>
<dbReference type="KEGG" id="osa:4348304"/>
<dbReference type="eggNOG" id="KOG0156">
    <property type="taxonomic scope" value="Eukaryota"/>
</dbReference>
<dbReference type="HOGENOM" id="CLU_001570_4_0_1"/>
<dbReference type="InParanoid" id="Q7G602"/>
<dbReference type="OMA" id="QIRLGNC"/>
<dbReference type="OrthoDB" id="2789670at2759"/>
<dbReference type="BioCyc" id="MetaCyc:MONOMER-20527"/>
<dbReference type="BRENDA" id="1.14.14.82">
    <property type="organism ID" value="8948"/>
</dbReference>
<dbReference type="PlantReactome" id="R-OSA-1119322">
    <property type="pathway name" value="Leucodelphinidin biosynthesis"/>
</dbReference>
<dbReference type="PlantReactome" id="R-OSA-1119415">
    <property type="pathway name" value="Leucopelargonidin and leucocyanidin biosynthesis"/>
</dbReference>
<dbReference type="UniPathway" id="UPA00154"/>
<dbReference type="Proteomes" id="UP000000763">
    <property type="component" value="Chromosome 10"/>
</dbReference>
<dbReference type="Proteomes" id="UP000007752">
    <property type="component" value="Chromosome 10"/>
</dbReference>
<dbReference type="Proteomes" id="UP000059680">
    <property type="component" value="Chromosome 10"/>
</dbReference>
<dbReference type="GO" id="GO:0016020">
    <property type="term" value="C:membrane"/>
    <property type="evidence" value="ECO:0007669"/>
    <property type="project" value="UniProtKB-SubCell"/>
</dbReference>
<dbReference type="GO" id="GO:0016711">
    <property type="term" value="F:flavonoid 3'-monooxygenase activity"/>
    <property type="evidence" value="ECO:0007669"/>
    <property type="project" value="UniProtKB-EC"/>
</dbReference>
<dbReference type="GO" id="GO:0020037">
    <property type="term" value="F:heme binding"/>
    <property type="evidence" value="ECO:0007669"/>
    <property type="project" value="InterPro"/>
</dbReference>
<dbReference type="GO" id="GO:0005506">
    <property type="term" value="F:iron ion binding"/>
    <property type="evidence" value="ECO:0007669"/>
    <property type="project" value="InterPro"/>
</dbReference>
<dbReference type="GO" id="GO:0009813">
    <property type="term" value="P:flavonoid biosynthetic process"/>
    <property type="evidence" value="ECO:0007669"/>
    <property type="project" value="UniProtKB-UniPathway"/>
</dbReference>
<dbReference type="FunFam" id="1.10.630.10:FF:000056">
    <property type="entry name" value="Red aleurone1"/>
    <property type="match status" value="1"/>
</dbReference>
<dbReference type="Gene3D" id="1.10.630.10">
    <property type="entry name" value="Cytochrome P450"/>
    <property type="match status" value="1"/>
</dbReference>
<dbReference type="InterPro" id="IPR001128">
    <property type="entry name" value="Cyt_P450"/>
</dbReference>
<dbReference type="InterPro" id="IPR017972">
    <property type="entry name" value="Cyt_P450_CS"/>
</dbReference>
<dbReference type="InterPro" id="IPR002401">
    <property type="entry name" value="Cyt_P450_E_grp-I"/>
</dbReference>
<dbReference type="InterPro" id="IPR036396">
    <property type="entry name" value="Cyt_P450_sf"/>
</dbReference>
<dbReference type="PANTHER" id="PTHR47944">
    <property type="entry name" value="CYTOCHROME P450 98A9"/>
    <property type="match status" value="1"/>
</dbReference>
<dbReference type="PANTHER" id="PTHR47944:SF18">
    <property type="entry name" value="FLAVONOID 3'-MONOOXYGENASE"/>
    <property type="match status" value="1"/>
</dbReference>
<dbReference type="Pfam" id="PF00067">
    <property type="entry name" value="p450"/>
    <property type="match status" value="1"/>
</dbReference>
<dbReference type="PRINTS" id="PR00463">
    <property type="entry name" value="EP450I"/>
</dbReference>
<dbReference type="PRINTS" id="PR00385">
    <property type="entry name" value="P450"/>
</dbReference>
<dbReference type="SUPFAM" id="SSF48264">
    <property type="entry name" value="Cytochrome P450"/>
    <property type="match status" value="1"/>
</dbReference>
<dbReference type="PROSITE" id="PS00086">
    <property type="entry name" value="CYTOCHROME_P450"/>
    <property type="match status" value="1"/>
</dbReference>
<feature type="chain" id="PRO_0000440770" description="Flavonoid 3'-monooxygenase CYP75B3">
    <location>
        <begin position="1"/>
        <end position="526"/>
    </location>
</feature>
<feature type="transmembrane region" description="Helical" evidence="2">
    <location>
        <begin position="6"/>
        <end position="26"/>
    </location>
</feature>
<feature type="binding site" description="axial binding residue" evidence="1">
    <location>
        <position position="461"/>
    </location>
    <ligand>
        <name>heme</name>
        <dbReference type="ChEBI" id="CHEBI:30413"/>
    </ligand>
    <ligandPart>
        <name>Fe</name>
        <dbReference type="ChEBI" id="CHEBI:18248"/>
    </ligandPart>
</feature>
<proteinExistence type="evidence at transcript level"/>
<organism>
    <name type="scientific">Oryza sativa subsp. japonica</name>
    <name type="common">Rice</name>
    <dbReference type="NCBI Taxonomy" id="39947"/>
    <lineage>
        <taxon>Eukaryota</taxon>
        <taxon>Viridiplantae</taxon>
        <taxon>Streptophyta</taxon>
        <taxon>Embryophyta</taxon>
        <taxon>Tracheophyta</taxon>
        <taxon>Spermatophyta</taxon>
        <taxon>Magnoliopsida</taxon>
        <taxon>Liliopsida</taxon>
        <taxon>Poales</taxon>
        <taxon>Poaceae</taxon>
        <taxon>BOP clade</taxon>
        <taxon>Oryzoideae</taxon>
        <taxon>Oryzeae</taxon>
        <taxon>Oryzinae</taxon>
        <taxon>Oryza</taxon>
        <taxon>Oryza sativa</taxon>
    </lineage>
</organism>
<comment type="function">
    <text evidence="3 8">Catalyzes the 3'-hydroxylation of the flavonoid B-ring to the 3',4'-hydroxylated state (PubMed:18726614). Catalyzes the 3'-hydroxylation of apigenin to generate luteolin (Probable).</text>
</comment>
<comment type="catalytic activity">
    <reaction evidence="7">
        <text>a 3'-unsubstituted flavone + reduced [NADPH--hemoprotein reductase] + O2 = a 3'-hydroxyflavone + oxidized [NADPH--hemoprotein reductase] + H2O + H(+)</text>
        <dbReference type="Rhea" id="RHEA:16337"/>
        <dbReference type="Rhea" id="RHEA-COMP:11964"/>
        <dbReference type="Rhea" id="RHEA-COMP:11965"/>
        <dbReference type="ChEBI" id="CHEBI:15377"/>
        <dbReference type="ChEBI" id="CHEBI:15378"/>
        <dbReference type="ChEBI" id="CHEBI:15379"/>
        <dbReference type="ChEBI" id="CHEBI:27741"/>
        <dbReference type="ChEBI" id="CHEBI:57618"/>
        <dbReference type="ChEBI" id="CHEBI:58210"/>
        <dbReference type="ChEBI" id="CHEBI:138726"/>
        <dbReference type="EC" id="1.14.14.82"/>
    </reaction>
</comment>
<comment type="cofactor">
    <cofactor evidence="1">
        <name>heme</name>
        <dbReference type="ChEBI" id="CHEBI:30413"/>
    </cofactor>
</comment>
<comment type="pathway">
    <text evidence="6">Secondary metabolite biosynthesis; flavonoid biosynthesis.</text>
</comment>
<comment type="subcellular location">
    <subcellularLocation>
        <location evidence="6">Membrane</location>
        <topology evidence="2">Single-pass membrane protein</topology>
    </subcellularLocation>
</comment>
<comment type="induction">
    <text evidence="3">Induced by light.</text>
</comment>
<comment type="similarity">
    <text evidence="6">Belongs to the cytochrome P450 family.</text>
</comment>
<protein>
    <recommendedName>
        <fullName evidence="6">Flavonoid 3'-monooxygenase CYP75B3</fullName>
        <ecNumber evidence="7">1.14.14.82</ecNumber>
    </recommendedName>
    <alternativeName>
        <fullName evidence="5">Cytochrome P450 75B3</fullName>
    </alternativeName>
    <alternativeName>
        <fullName evidence="4">Flavonoid 3'-hydroxylase</fullName>
        <shortName evidence="4">OsF3'H</shortName>
    </alternativeName>
</protein>
<keyword id="KW-0284">Flavonoid biosynthesis</keyword>
<keyword id="KW-0349">Heme</keyword>
<keyword id="KW-0408">Iron</keyword>
<keyword id="KW-0472">Membrane</keyword>
<keyword id="KW-0479">Metal-binding</keyword>
<keyword id="KW-0503">Monooxygenase</keyword>
<keyword id="KW-0521">NADP</keyword>
<keyword id="KW-0560">Oxidoreductase</keyword>
<keyword id="KW-1185">Reference proteome</keyword>
<keyword id="KW-0812">Transmembrane</keyword>
<keyword id="KW-1133">Transmembrane helix</keyword>
<accession>Q7G602</accession>
<accession>Q8S845</accession>